<name>V_HENDH</name>
<accession>O55777</accession>
<dbReference type="EMBL" id="AF010304">
    <property type="protein sequence ID" value="AAC04241.1"/>
    <property type="molecule type" value="mRNA"/>
</dbReference>
<dbReference type="EMBL" id="AF017149">
    <property type="protein sequence ID" value="AAC83189.1"/>
    <property type="molecule type" value="Genomic_RNA"/>
</dbReference>
<dbReference type="PIR" id="T03449">
    <property type="entry name" value="T03449"/>
</dbReference>
<dbReference type="SASBDB" id="O55777"/>
<dbReference type="SMR" id="O55777"/>
<dbReference type="IntAct" id="O55777">
    <property type="interactions" value="7"/>
</dbReference>
<dbReference type="Proteomes" id="UP000008771">
    <property type="component" value="Segment"/>
</dbReference>
<dbReference type="GO" id="GO:0043657">
    <property type="term" value="C:host cell"/>
    <property type="evidence" value="ECO:0007669"/>
    <property type="project" value="GOC"/>
</dbReference>
<dbReference type="GO" id="GO:0030430">
    <property type="term" value="C:host cell cytoplasm"/>
    <property type="evidence" value="ECO:0000314"/>
    <property type="project" value="DisProt"/>
</dbReference>
<dbReference type="GO" id="GO:0061676">
    <property type="term" value="F:importin-alpha family protein binding"/>
    <property type="evidence" value="ECO:0000353"/>
    <property type="project" value="DisProt"/>
</dbReference>
<dbReference type="GO" id="GO:0046872">
    <property type="term" value="F:metal ion binding"/>
    <property type="evidence" value="ECO:0007669"/>
    <property type="project" value="UniProtKB-KW"/>
</dbReference>
<dbReference type="GO" id="GO:0031267">
    <property type="term" value="F:small GTPase binding"/>
    <property type="evidence" value="ECO:0000315"/>
    <property type="project" value="DisProt"/>
</dbReference>
<dbReference type="GO" id="GO:0075733">
    <property type="term" value="P:intracellular transport of virus"/>
    <property type="evidence" value="ECO:0000314"/>
    <property type="project" value="DisProt"/>
</dbReference>
<dbReference type="GO" id="GO:1901344">
    <property type="term" value="P:response to leptomycin B"/>
    <property type="evidence" value="ECO:0000314"/>
    <property type="project" value="DisProt"/>
</dbReference>
<dbReference type="GO" id="GO:0039554">
    <property type="term" value="P:symbiont-mediated suppression of host cytoplasmic pattern recognition receptor signaling pathway via inhibition of MDA-5 activity"/>
    <property type="evidence" value="ECO:0007669"/>
    <property type="project" value="UniProtKB-KW"/>
</dbReference>
<dbReference type="GO" id="GO:0039563">
    <property type="term" value="P:symbiont-mediated suppression of host JAK-STAT cascade via inhibition of STAT1 activity"/>
    <property type="evidence" value="ECO:0007669"/>
    <property type="project" value="UniProtKB-KW"/>
</dbReference>
<dbReference type="GO" id="GO:0039564">
    <property type="term" value="P:symbiont-mediated suppression of host JAK-STAT cascade via inhibition of STAT2 activity"/>
    <property type="evidence" value="ECO:0007669"/>
    <property type="project" value="UniProtKB-KW"/>
</dbReference>
<dbReference type="GO" id="GO:0039502">
    <property type="term" value="P:symbiont-mediated suppression of host type I interferon-mediated signaling pathway"/>
    <property type="evidence" value="ECO:0007669"/>
    <property type="project" value="UniProtKB-KW"/>
</dbReference>
<dbReference type="DisProt" id="DP03001"/>
<dbReference type="Gene3D" id="4.10.80.340">
    <property type="match status" value="1"/>
</dbReference>
<dbReference type="Gene3D" id="6.10.250.2490">
    <property type="match status" value="1"/>
</dbReference>
<dbReference type="InterPro" id="IPR024279">
    <property type="entry name" value="Paramyx_V_Zn-bd"/>
</dbReference>
<dbReference type="InterPro" id="IPR035430">
    <property type="entry name" value="Paramyxo_PNT"/>
</dbReference>
<dbReference type="InterPro" id="IPR025909">
    <property type="entry name" value="Soyouz_module"/>
</dbReference>
<dbReference type="Pfam" id="PF14320">
    <property type="entry name" value="Paramyxo_PNT"/>
    <property type="match status" value="1"/>
</dbReference>
<dbReference type="Pfam" id="PF14313">
    <property type="entry name" value="Soyouz_module"/>
    <property type="match status" value="1"/>
</dbReference>
<dbReference type="Pfam" id="PF13008">
    <property type="entry name" value="zf-Paramyx-P"/>
    <property type="match status" value="1"/>
</dbReference>
<feature type="chain" id="PRO_0000236014" description="Non-structural protein V">
    <location>
        <begin position="1"/>
        <end position="457"/>
    </location>
</feature>
<feature type="region of interest" description="Disordered" evidence="2">
    <location>
        <begin position="26"/>
        <end position="104"/>
    </location>
</feature>
<feature type="region of interest" description="Disordered" evidence="2">
    <location>
        <begin position="193"/>
        <end position="403"/>
    </location>
</feature>
<feature type="compositionally biased region" description="Polar residues" evidence="2">
    <location>
        <begin position="28"/>
        <end position="37"/>
    </location>
</feature>
<feature type="compositionally biased region" description="Polar residues" evidence="2">
    <location>
        <begin position="77"/>
        <end position="96"/>
    </location>
</feature>
<feature type="compositionally biased region" description="Acidic residues" evidence="2">
    <location>
        <begin position="240"/>
        <end position="252"/>
    </location>
</feature>
<feature type="compositionally biased region" description="Basic and acidic residues" evidence="2">
    <location>
        <begin position="296"/>
        <end position="317"/>
    </location>
</feature>
<feature type="binding site" evidence="1">
    <location>
        <position position="406"/>
    </location>
    <ligand>
        <name>Zn(2+)</name>
        <dbReference type="ChEBI" id="CHEBI:29105"/>
        <label>1</label>
    </ligand>
</feature>
<feature type="binding site" evidence="1">
    <location>
        <position position="425"/>
    </location>
    <ligand>
        <name>Zn(2+)</name>
        <dbReference type="ChEBI" id="CHEBI:29105"/>
        <label>1</label>
    </ligand>
</feature>
<feature type="binding site" evidence="1">
    <location>
        <position position="429"/>
    </location>
    <ligand>
        <name>Zn(2+)</name>
        <dbReference type="ChEBI" id="CHEBI:29105"/>
        <label>2</label>
    </ligand>
</feature>
<feature type="binding site" evidence="1">
    <location>
        <position position="441"/>
    </location>
    <ligand>
        <name>Zn(2+)</name>
        <dbReference type="ChEBI" id="CHEBI:29105"/>
        <label>2</label>
    </ligand>
</feature>
<feature type="binding site" evidence="1">
    <location>
        <position position="443"/>
    </location>
    <ligand>
        <name>Zn(2+)</name>
        <dbReference type="ChEBI" id="CHEBI:29105"/>
        <label>2</label>
    </ligand>
</feature>
<feature type="binding site" evidence="1">
    <location>
        <position position="446"/>
    </location>
    <ligand>
        <name>Zn(2+)</name>
        <dbReference type="ChEBI" id="CHEBI:29105"/>
        <label>2</label>
    </ligand>
</feature>
<feature type="binding site" evidence="1">
    <location>
        <position position="450"/>
    </location>
    <ligand>
        <name>Zn(2+)</name>
        <dbReference type="ChEBI" id="CHEBI:29105"/>
        <label>1</label>
    </ligand>
</feature>
<feature type="binding site" evidence="1">
    <location>
        <position position="453"/>
    </location>
    <ligand>
        <name>Zn(2+)</name>
        <dbReference type="ChEBI" id="CHEBI:29105"/>
        <label>1</label>
    </ligand>
</feature>
<feature type="modified residue" description="Phosphoserine; by host" evidence="1">
    <location>
        <position position="257"/>
    </location>
</feature>
<feature type="modified residue" description="Phosphoserine; by host" evidence="1">
    <location>
        <position position="350"/>
    </location>
</feature>
<keyword id="KW-1035">Host cytoplasm</keyword>
<keyword id="KW-0945">Host-virus interaction</keyword>
<keyword id="KW-1090">Inhibition of host innate immune response by virus</keyword>
<keyword id="KW-1114">Inhibition of host interferon signaling pathway by virus</keyword>
<keyword id="KW-1089">Inhibition of host MDA5 by virus</keyword>
<keyword id="KW-1113">Inhibition of host RLR pathway by virus</keyword>
<keyword id="KW-1105">Inhibition of host STAT1 by virus</keyword>
<keyword id="KW-1106">Inhibition of host STAT2 by virus</keyword>
<keyword id="KW-0922">Interferon antiviral system evasion</keyword>
<keyword id="KW-0479">Metal-binding</keyword>
<keyword id="KW-0597">Phosphoprotein</keyword>
<keyword id="KW-1185">Reference proteome</keyword>
<keyword id="KW-0691">RNA editing</keyword>
<keyword id="KW-0899">Viral immunoevasion</keyword>
<keyword id="KW-0862">Zinc</keyword>
<comment type="function">
    <text evidence="1">Plays an essential role in the inhibition of host immune response. Prevents the establishment of cellular antiviral state by blocking interferon-alpha/beta (IFN-alpha/beta) production and signaling pathway. Interacts with host IFIH1/MDA5 and DHX58/LGP2 to inhibit the transduction pathway involved in the activation of IFN-beta promoter, thus protecting the virus against cell antiviral state. Blocks the type I interferon signaling pathway by interacting with host STAT1 and STAT2 and thereby inhibiting their phosphorylation and subsequent nuclear translocation. Efficiently blocks the type II interferon signaling pathway (By similarity).</text>
</comment>
<comment type="subunit">
    <text evidence="1">Interacts with host IFIH1/MDA5, DHX58/LGP2, STAT1 and STAT2.</text>
</comment>
<comment type="subcellular location">
    <subcellularLocation>
        <location evidence="1">Host cytoplasm</location>
    </subcellularLocation>
</comment>
<comment type="RNA editing">
    <location>
        <position position="407"/>
    </location>
    <text>Partially edited. RNA editing at this position consists of an insertion of one or two guanine nucleotides. The sequence displayed here is the V protein, derived from the +1G edited RNA. The unedited RNA gives rise to the P protein (AC O55778), the +2G edited RNA gives rise to the W protein (AC P0C1C6).</text>
</comment>
<comment type="miscellaneous">
    <text>The P/V/C gene has two overlapping open reading frames. One encodes the P/V/W proteins and the other the C protein.</text>
</comment>
<comment type="similarity">
    <text evidence="3">Belongs to the paramyxoviruses V protein family.</text>
</comment>
<organism>
    <name type="scientific">Hendra virus (isolate Horse/Autralia/Hendra/1994)</name>
    <dbReference type="NCBI Taxonomy" id="928303"/>
    <lineage>
        <taxon>Viruses</taxon>
        <taxon>Riboviria</taxon>
        <taxon>Orthornavirae</taxon>
        <taxon>Negarnaviricota</taxon>
        <taxon>Haploviricotina</taxon>
        <taxon>Monjiviricetes</taxon>
        <taxon>Mononegavirales</taxon>
        <taxon>Paramyxoviridae</taxon>
        <taxon>Orthoparamyxovirinae</taxon>
        <taxon>Henipavirus</taxon>
        <taxon>Henipavirus hendraense</taxon>
    </lineage>
</organism>
<reference key="1">
    <citation type="journal article" date="1998" name="J. Virol.">
        <title>A novel P/V/C gene in a new member of the Paramyxoviridae family, which causes lethal infection in humans, horses, and other animals.</title>
        <authorList>
            <person name="Wang L.-F."/>
            <person name="Michalski W.P."/>
            <person name="Yu M."/>
            <person name="Pritchard L.I."/>
            <person name="Crameri G."/>
            <person name="Shiell B."/>
            <person name="Eaton B.T."/>
        </authorList>
    </citation>
    <scope>NUCLEOTIDE SEQUENCE [MRNA]</scope>
</reference>
<reference key="2">
    <citation type="journal article" date="2004" name="Proc. Natl. Acad. Sci. U.S.A.">
        <title>The V proteins of paramyxoviruses bind the IFN-inducible RNA helicase, mda-5, and inhibit its activation of the IFN-beta promoter.</title>
        <authorList>
            <person name="Andrejeva J."/>
            <person name="Childs K.S."/>
            <person name="Young D.F."/>
            <person name="Carlos T.S."/>
            <person name="Stock N."/>
            <person name="Goodbourn S."/>
            <person name="Randall R.E."/>
        </authorList>
    </citation>
    <scope>INTERACTION WITH HUMAN IFIH1/MDA5</scope>
    <scope>INTERFERON EVASION</scope>
</reference>
<protein>
    <recommendedName>
        <fullName>Non-structural protein V</fullName>
    </recommendedName>
</protein>
<evidence type="ECO:0000250" key="1"/>
<evidence type="ECO:0000256" key="2">
    <source>
        <dbReference type="SAM" id="MobiDB-lite"/>
    </source>
</evidence>
<evidence type="ECO:0000305" key="3"/>
<sequence length="457" mass="50648">MDKLDLVNDGLDIIDFIQKNQKEIQKTYGRSSIQQPSTKDRTRAWEDFLQSTSGEHEQAEGGMPKNDGGTEGRNVEDLSSVTSSDGTIGQRVSNTRAWAEDPDDIQLDPMVTDVVYHDHGGECTGHGPSSSPERGWSYHMSGTHDGNVRAVPDTKVLPNAPKTTVPEEVREIDLIGLEDKFASAGLNPAAVPFVPKNQSTPTEEPPVIPEYYYGSGRRGDLSKSPPRGNVNLDSIKIYTSDDEDENQLEYEDEFAKSSSEVVIDTTPEDNDSINQEEVVGDPSDQGLEHPFPLGKFPEKEETPDVRRKDSLMQDSCKRGGVPKRLPMLSEEFECSGSDDPIIQELEREGSHPGGSLRLREPPQSSGNSRNQPDRQLKTGDAASPGGVQRPGTPMPKSRIMPIKKGHRREVSICWDGRRAWVEEWCNPVCSRITPQPRKQECYCGECPTECSQCCHEE</sequence>
<gene>
    <name type="primary">P/V/C</name>
</gene>
<organismHost>
    <name type="scientific">Equus caballus</name>
    <name type="common">Horse</name>
    <dbReference type="NCBI Taxonomy" id="9796"/>
</organismHost>
<organismHost>
    <name type="scientific">Homo sapiens</name>
    <name type="common">Human</name>
    <dbReference type="NCBI Taxonomy" id="9606"/>
</organismHost>
<organismHost>
    <name type="scientific">Pteropus alecto</name>
    <name type="common">Black flying fox</name>
    <dbReference type="NCBI Taxonomy" id="9402"/>
</organismHost>
<organismHost>
    <name type="scientific">Pteropus poliocephalus</name>
    <name type="common">Grey-headed flying fox</name>
    <dbReference type="NCBI Taxonomy" id="9403"/>
</organismHost>
<organismHost>
    <name type="scientific">Pteropus scapulatus</name>
    <name type="common">Little red flying fox</name>
    <dbReference type="NCBI Taxonomy" id="94117"/>
</organismHost>
<proteinExistence type="evidence at protein level"/>